<keyword id="KW-0067">ATP-binding</keyword>
<keyword id="KW-0997">Cell inner membrane</keyword>
<keyword id="KW-1003">Cell membrane</keyword>
<keyword id="KW-0963">Cytoplasm</keyword>
<keyword id="KW-0472">Membrane</keyword>
<keyword id="KW-0479">Metal-binding</keyword>
<keyword id="KW-0547">Nucleotide-binding</keyword>
<keyword id="KW-0653">Protein transport</keyword>
<keyword id="KW-1278">Translocase</keyword>
<keyword id="KW-0811">Translocation</keyword>
<keyword id="KW-0813">Transport</keyword>
<keyword id="KW-0862">Zinc</keyword>
<dbReference type="EC" id="7.4.2.8" evidence="1"/>
<dbReference type="EMBL" id="FM178379">
    <property type="protein sequence ID" value="CAQ80321.1"/>
    <property type="molecule type" value="Genomic_DNA"/>
</dbReference>
<dbReference type="RefSeq" id="WP_012551092.1">
    <property type="nucleotide sequence ID" value="NC_011312.1"/>
</dbReference>
<dbReference type="SMR" id="B6ELG8"/>
<dbReference type="KEGG" id="vsa:VSAL_I2637"/>
<dbReference type="eggNOG" id="COG0653">
    <property type="taxonomic scope" value="Bacteria"/>
</dbReference>
<dbReference type="HOGENOM" id="CLU_005314_3_0_6"/>
<dbReference type="Proteomes" id="UP000001730">
    <property type="component" value="Chromosome 1"/>
</dbReference>
<dbReference type="GO" id="GO:0031522">
    <property type="term" value="C:cell envelope Sec protein transport complex"/>
    <property type="evidence" value="ECO:0007669"/>
    <property type="project" value="TreeGrafter"/>
</dbReference>
<dbReference type="GO" id="GO:0005829">
    <property type="term" value="C:cytosol"/>
    <property type="evidence" value="ECO:0007669"/>
    <property type="project" value="TreeGrafter"/>
</dbReference>
<dbReference type="GO" id="GO:0005886">
    <property type="term" value="C:plasma membrane"/>
    <property type="evidence" value="ECO:0007669"/>
    <property type="project" value="UniProtKB-SubCell"/>
</dbReference>
<dbReference type="GO" id="GO:0005524">
    <property type="term" value="F:ATP binding"/>
    <property type="evidence" value="ECO:0007669"/>
    <property type="project" value="UniProtKB-UniRule"/>
</dbReference>
<dbReference type="GO" id="GO:0046872">
    <property type="term" value="F:metal ion binding"/>
    <property type="evidence" value="ECO:0007669"/>
    <property type="project" value="UniProtKB-KW"/>
</dbReference>
<dbReference type="GO" id="GO:0008564">
    <property type="term" value="F:protein-exporting ATPase activity"/>
    <property type="evidence" value="ECO:0007669"/>
    <property type="project" value="UniProtKB-EC"/>
</dbReference>
<dbReference type="GO" id="GO:0065002">
    <property type="term" value="P:intracellular protein transmembrane transport"/>
    <property type="evidence" value="ECO:0007669"/>
    <property type="project" value="UniProtKB-UniRule"/>
</dbReference>
<dbReference type="GO" id="GO:0017038">
    <property type="term" value="P:protein import"/>
    <property type="evidence" value="ECO:0007669"/>
    <property type="project" value="InterPro"/>
</dbReference>
<dbReference type="GO" id="GO:0006605">
    <property type="term" value="P:protein targeting"/>
    <property type="evidence" value="ECO:0007669"/>
    <property type="project" value="UniProtKB-UniRule"/>
</dbReference>
<dbReference type="GO" id="GO:0043952">
    <property type="term" value="P:protein transport by the Sec complex"/>
    <property type="evidence" value="ECO:0007669"/>
    <property type="project" value="TreeGrafter"/>
</dbReference>
<dbReference type="CDD" id="cd17928">
    <property type="entry name" value="DEXDc_SecA"/>
    <property type="match status" value="1"/>
</dbReference>
<dbReference type="CDD" id="cd18803">
    <property type="entry name" value="SF2_C_secA"/>
    <property type="match status" value="1"/>
</dbReference>
<dbReference type="FunFam" id="1.10.3060.10:FF:000001">
    <property type="entry name" value="Preprotein translocase subunit SecA"/>
    <property type="match status" value="1"/>
</dbReference>
<dbReference type="FunFam" id="3.40.50.300:FF:000081">
    <property type="entry name" value="Preprotein translocase subunit SecA"/>
    <property type="match status" value="1"/>
</dbReference>
<dbReference type="FunFam" id="3.40.50.300:FF:000113">
    <property type="entry name" value="Preprotein translocase subunit SecA"/>
    <property type="match status" value="1"/>
</dbReference>
<dbReference type="FunFam" id="3.90.1440.10:FF:000001">
    <property type="entry name" value="Preprotein translocase subunit SecA"/>
    <property type="match status" value="1"/>
</dbReference>
<dbReference type="Gene3D" id="1.10.3060.10">
    <property type="entry name" value="Helical scaffold and wing domains of SecA"/>
    <property type="match status" value="1"/>
</dbReference>
<dbReference type="Gene3D" id="3.40.50.300">
    <property type="entry name" value="P-loop containing nucleotide triphosphate hydrolases"/>
    <property type="match status" value="2"/>
</dbReference>
<dbReference type="Gene3D" id="3.90.1440.10">
    <property type="entry name" value="SecA, preprotein cross-linking domain"/>
    <property type="match status" value="1"/>
</dbReference>
<dbReference type="HAMAP" id="MF_01382">
    <property type="entry name" value="SecA"/>
    <property type="match status" value="1"/>
</dbReference>
<dbReference type="InterPro" id="IPR014001">
    <property type="entry name" value="Helicase_ATP-bd"/>
</dbReference>
<dbReference type="InterPro" id="IPR001650">
    <property type="entry name" value="Helicase_C-like"/>
</dbReference>
<dbReference type="InterPro" id="IPR027417">
    <property type="entry name" value="P-loop_NTPase"/>
</dbReference>
<dbReference type="InterPro" id="IPR004027">
    <property type="entry name" value="SEC_C_motif"/>
</dbReference>
<dbReference type="InterPro" id="IPR000185">
    <property type="entry name" value="SecA"/>
</dbReference>
<dbReference type="InterPro" id="IPR020937">
    <property type="entry name" value="SecA_CS"/>
</dbReference>
<dbReference type="InterPro" id="IPR011115">
    <property type="entry name" value="SecA_DEAD"/>
</dbReference>
<dbReference type="InterPro" id="IPR014018">
    <property type="entry name" value="SecA_motor_DEAD"/>
</dbReference>
<dbReference type="InterPro" id="IPR011130">
    <property type="entry name" value="SecA_preprotein_X-link_dom"/>
</dbReference>
<dbReference type="InterPro" id="IPR044722">
    <property type="entry name" value="SecA_SF2_C"/>
</dbReference>
<dbReference type="InterPro" id="IPR011116">
    <property type="entry name" value="SecA_Wing/Scaffold"/>
</dbReference>
<dbReference type="InterPro" id="IPR036266">
    <property type="entry name" value="SecA_Wing/Scaffold_sf"/>
</dbReference>
<dbReference type="InterPro" id="IPR036670">
    <property type="entry name" value="SecA_X-link_sf"/>
</dbReference>
<dbReference type="NCBIfam" id="NF009538">
    <property type="entry name" value="PRK12904.1"/>
    <property type="match status" value="1"/>
</dbReference>
<dbReference type="NCBIfam" id="TIGR00963">
    <property type="entry name" value="secA"/>
    <property type="match status" value="1"/>
</dbReference>
<dbReference type="PANTHER" id="PTHR30612:SF0">
    <property type="entry name" value="CHLOROPLAST PROTEIN-TRANSPORTING ATPASE"/>
    <property type="match status" value="1"/>
</dbReference>
<dbReference type="PANTHER" id="PTHR30612">
    <property type="entry name" value="SECA INNER MEMBRANE COMPONENT OF SEC PROTEIN SECRETION SYSTEM"/>
    <property type="match status" value="1"/>
</dbReference>
<dbReference type="Pfam" id="PF21090">
    <property type="entry name" value="P-loop_SecA"/>
    <property type="match status" value="1"/>
</dbReference>
<dbReference type="Pfam" id="PF02810">
    <property type="entry name" value="SEC-C"/>
    <property type="match status" value="1"/>
</dbReference>
<dbReference type="Pfam" id="PF07517">
    <property type="entry name" value="SecA_DEAD"/>
    <property type="match status" value="1"/>
</dbReference>
<dbReference type="Pfam" id="PF01043">
    <property type="entry name" value="SecA_PP_bind"/>
    <property type="match status" value="1"/>
</dbReference>
<dbReference type="Pfam" id="PF07516">
    <property type="entry name" value="SecA_SW"/>
    <property type="match status" value="1"/>
</dbReference>
<dbReference type="PRINTS" id="PR00906">
    <property type="entry name" value="SECA"/>
</dbReference>
<dbReference type="SMART" id="SM00957">
    <property type="entry name" value="SecA_DEAD"/>
    <property type="match status" value="1"/>
</dbReference>
<dbReference type="SMART" id="SM00958">
    <property type="entry name" value="SecA_PP_bind"/>
    <property type="match status" value="1"/>
</dbReference>
<dbReference type="SUPFAM" id="SSF81886">
    <property type="entry name" value="Helical scaffold and wing domains of SecA"/>
    <property type="match status" value="1"/>
</dbReference>
<dbReference type="SUPFAM" id="SSF52540">
    <property type="entry name" value="P-loop containing nucleoside triphosphate hydrolases"/>
    <property type="match status" value="2"/>
</dbReference>
<dbReference type="SUPFAM" id="SSF81767">
    <property type="entry name" value="Pre-protein crosslinking domain of SecA"/>
    <property type="match status" value="1"/>
</dbReference>
<dbReference type="PROSITE" id="PS01312">
    <property type="entry name" value="SECA"/>
    <property type="match status" value="1"/>
</dbReference>
<dbReference type="PROSITE" id="PS51196">
    <property type="entry name" value="SECA_MOTOR_DEAD"/>
    <property type="match status" value="1"/>
</dbReference>
<evidence type="ECO:0000255" key="1">
    <source>
        <dbReference type="HAMAP-Rule" id="MF_01382"/>
    </source>
</evidence>
<evidence type="ECO:0000256" key="2">
    <source>
        <dbReference type="SAM" id="MobiDB-lite"/>
    </source>
</evidence>
<comment type="function">
    <text evidence="1">Part of the Sec protein translocase complex. Interacts with the SecYEG preprotein conducting channel. Has a central role in coupling the hydrolysis of ATP to the transfer of proteins into and across the cell membrane, serving both as a receptor for the preprotein-SecB complex and as an ATP-driven molecular motor driving the stepwise translocation of polypeptide chains across the membrane.</text>
</comment>
<comment type="catalytic activity">
    <reaction evidence="1">
        <text>ATP + H2O + cellular proteinSide 1 = ADP + phosphate + cellular proteinSide 2.</text>
        <dbReference type="EC" id="7.4.2.8"/>
    </reaction>
</comment>
<comment type="cofactor">
    <cofactor evidence="1">
        <name>Zn(2+)</name>
        <dbReference type="ChEBI" id="CHEBI:29105"/>
    </cofactor>
    <text evidence="1">May bind 1 zinc ion per subunit.</text>
</comment>
<comment type="subunit">
    <text evidence="1">Monomer and homodimer. Part of the essential Sec protein translocation apparatus which comprises SecA, SecYEG and auxiliary proteins SecDF-YajC and YidC.</text>
</comment>
<comment type="subcellular location">
    <subcellularLocation>
        <location evidence="1">Cell inner membrane</location>
        <topology evidence="1">Peripheral membrane protein</topology>
        <orientation evidence="1">Cytoplasmic side</orientation>
    </subcellularLocation>
    <subcellularLocation>
        <location evidence="1">Cytoplasm</location>
    </subcellularLocation>
    <text evidence="1">Distribution is 50-50.</text>
</comment>
<comment type="similarity">
    <text evidence="1">Belongs to the SecA family.</text>
</comment>
<gene>
    <name evidence="1" type="primary">secA</name>
    <name type="ordered locus">VSAL_I2637</name>
</gene>
<reference key="1">
    <citation type="journal article" date="2008" name="BMC Genomics">
        <title>The genome sequence of the fish pathogen Aliivibrio salmonicida strain LFI1238 shows extensive evidence of gene decay.</title>
        <authorList>
            <person name="Hjerde E."/>
            <person name="Lorentzen M.S."/>
            <person name="Holden M.T."/>
            <person name="Seeger K."/>
            <person name="Paulsen S."/>
            <person name="Bason N."/>
            <person name="Churcher C."/>
            <person name="Harris D."/>
            <person name="Norbertczak H."/>
            <person name="Quail M.A."/>
            <person name="Sanders S."/>
            <person name="Thurston S."/>
            <person name="Parkhill J."/>
            <person name="Willassen N.P."/>
            <person name="Thomson N.R."/>
        </authorList>
    </citation>
    <scope>NUCLEOTIDE SEQUENCE [LARGE SCALE GENOMIC DNA]</scope>
    <source>
        <strain>LFI1238</strain>
    </source>
</reference>
<accession>B6ELG8</accession>
<name>SECA_ALISL</name>
<feature type="chain" id="PRO_1000144970" description="Protein translocase subunit SecA">
    <location>
        <begin position="1"/>
        <end position="907"/>
    </location>
</feature>
<feature type="region of interest" description="Disordered" evidence="2">
    <location>
        <begin position="862"/>
        <end position="885"/>
    </location>
</feature>
<feature type="compositionally biased region" description="Basic and acidic residues" evidence="2">
    <location>
        <begin position="867"/>
        <end position="885"/>
    </location>
</feature>
<feature type="binding site" evidence="1">
    <location>
        <position position="87"/>
    </location>
    <ligand>
        <name>ATP</name>
        <dbReference type="ChEBI" id="CHEBI:30616"/>
    </ligand>
</feature>
<feature type="binding site" evidence="1">
    <location>
        <begin position="105"/>
        <end position="109"/>
    </location>
    <ligand>
        <name>ATP</name>
        <dbReference type="ChEBI" id="CHEBI:30616"/>
    </ligand>
</feature>
<feature type="binding site" evidence="1">
    <location>
        <position position="512"/>
    </location>
    <ligand>
        <name>ATP</name>
        <dbReference type="ChEBI" id="CHEBI:30616"/>
    </ligand>
</feature>
<feature type="binding site" evidence="1">
    <location>
        <position position="892"/>
    </location>
    <ligand>
        <name>Zn(2+)</name>
        <dbReference type="ChEBI" id="CHEBI:29105"/>
    </ligand>
</feature>
<feature type="binding site" evidence="1">
    <location>
        <position position="894"/>
    </location>
    <ligand>
        <name>Zn(2+)</name>
        <dbReference type="ChEBI" id="CHEBI:29105"/>
    </ligand>
</feature>
<feature type="binding site" evidence="1">
    <location>
        <position position="903"/>
    </location>
    <ligand>
        <name>Zn(2+)</name>
        <dbReference type="ChEBI" id="CHEBI:29105"/>
    </ligand>
</feature>
<feature type="binding site" evidence="1">
    <location>
        <position position="904"/>
    </location>
    <ligand>
        <name>Zn(2+)</name>
        <dbReference type="ChEBI" id="CHEBI:29105"/>
    </ligand>
</feature>
<organism>
    <name type="scientific">Aliivibrio salmonicida (strain LFI1238)</name>
    <name type="common">Vibrio salmonicida (strain LFI1238)</name>
    <dbReference type="NCBI Taxonomy" id="316275"/>
    <lineage>
        <taxon>Bacteria</taxon>
        <taxon>Pseudomonadati</taxon>
        <taxon>Pseudomonadota</taxon>
        <taxon>Gammaproteobacteria</taxon>
        <taxon>Vibrionales</taxon>
        <taxon>Vibrionaceae</taxon>
        <taxon>Aliivibrio</taxon>
    </lineage>
</organism>
<proteinExistence type="inferred from homology"/>
<protein>
    <recommendedName>
        <fullName evidence="1">Protein translocase subunit SecA</fullName>
        <ecNumber evidence="1">7.4.2.8</ecNumber>
    </recommendedName>
</protein>
<sequence length="907" mass="103449">MFSKILTKVIGSRNDRTLRKLRKIVDQINKLEPQFESLQDEELKAKTIEFRSRLEQGESLDDLLPEAFATVREASKRLYGMRHFDVQMIGGMVLNDSQIAEMRTGEGKTLTATLPCYLNALTGKGVHVVTVNDYLAKRDAETNRELFEFLGMTVGINVPNMPPQEKKLAYQSDILYGTNNEFGFDYLRDNMAFRAEDRVQRERYFAVIDEVDSILIDEARTPLIISGPADDSSELYTRINILIPQLVKQDEEDSEDYRGEGHYTLDEKGKQTHLTENGQEFVEQLLKDEGLMEEEDTLYSPANISLLHHINAALRAHVLFEKDVDYIVKDDEVIIVDEHTGRTMPGRRWSEGLHQAVEAKEGVKIQNENQTLASITFQNFFRLYDKLSGMTGTADTEAFEFQSIYGLDTVVIPTNRPMTRNDMGDLVYMTEAEKFAAIIEDIKACSERGQPVLVGTVSIEKSELLSNALKTAKIKHNVLNAKFHEQEADIVANAGTSSAVTIATNMAGRGTDIVLGGNWQAEVAKLDNPSAEQVQTIKAAWKEAHDTVLTAGGLHIIGTERHESRRIDNQLRGRAGRQGDAGSSRFYLSMEDALMRIFASDRVSNMMKKLGMEEGEAIEHPWVTKAIENAQRKVEGRNFDIRKQLLEYDDVANDQRKVVYELRDELMNVDDISEMINHNRQDVLEGLFGQYIPPQSLEEMWDVEGLTTRLRTDFDLDLPIQEWLDSDNKLHEDNLREKIIESAFQVYKEKEESVGESVLRNFEKAVMLQTLDGLWKEHLAAMDHLRQGIHLRGYAQKNPKQEYKRESFELFEGLLDTLKLDVVSILSKVRVQQQEDVERMEEQRRKNAEEVARLQKLQHQNAENQLDDGHSSDQNHSPMVRDERKVGRNEVCPCGSGKKYKQCHGKI</sequence>